<organism>
    <name type="scientific">Saccharomyces cerevisiae (strain ATCC 204508 / S288c)</name>
    <name type="common">Baker's yeast</name>
    <dbReference type="NCBI Taxonomy" id="559292"/>
    <lineage>
        <taxon>Eukaryota</taxon>
        <taxon>Fungi</taxon>
        <taxon>Dikarya</taxon>
        <taxon>Ascomycota</taxon>
        <taxon>Saccharomycotina</taxon>
        <taxon>Saccharomycetes</taxon>
        <taxon>Saccharomycetales</taxon>
        <taxon>Saccharomycetaceae</taxon>
        <taxon>Saccharomyces</taxon>
    </lineage>
</organism>
<evidence type="ECO:0000305" key="1">
    <source>
    </source>
</evidence>
<proteinExistence type="uncertain"/>
<reference key="1">
    <citation type="journal article" date="1997" name="Nature">
        <title>The nucleotide sequence of Saccharomyces cerevisiae chromosome IX.</title>
        <authorList>
            <person name="Churcher C.M."/>
            <person name="Bowman S."/>
            <person name="Badcock K."/>
            <person name="Bankier A.T."/>
            <person name="Brown D."/>
            <person name="Chillingworth T."/>
            <person name="Connor R."/>
            <person name="Devlin K."/>
            <person name="Gentles S."/>
            <person name="Hamlin N."/>
            <person name="Harris D.E."/>
            <person name="Horsnell T."/>
            <person name="Hunt S."/>
            <person name="Jagels K."/>
            <person name="Jones M."/>
            <person name="Lye G."/>
            <person name="Moule S."/>
            <person name="Odell C."/>
            <person name="Pearson D."/>
            <person name="Rajandream M.A."/>
            <person name="Rice P."/>
            <person name="Rowley N."/>
            <person name="Skelton J."/>
            <person name="Smith V."/>
            <person name="Walsh S.V."/>
            <person name="Whitehead S."/>
            <person name="Barrell B.G."/>
        </authorList>
    </citation>
    <scope>NUCLEOTIDE SEQUENCE [LARGE SCALE GENOMIC DNA]</scope>
    <source>
        <strain>ATCC 204508 / S288c</strain>
    </source>
</reference>
<reference key="2">
    <citation type="journal article" date="2014" name="G3 (Bethesda)">
        <title>The reference genome sequence of Saccharomyces cerevisiae: Then and now.</title>
        <authorList>
            <person name="Engel S.R."/>
            <person name="Dietrich F.S."/>
            <person name="Fisk D.G."/>
            <person name="Binkley G."/>
            <person name="Balakrishnan R."/>
            <person name="Costanzo M.C."/>
            <person name="Dwight S.S."/>
            <person name="Hitz B.C."/>
            <person name="Karra K."/>
            <person name="Nash R.S."/>
            <person name="Weng S."/>
            <person name="Wong E.D."/>
            <person name="Lloyd P."/>
            <person name="Skrzypek M.S."/>
            <person name="Miyasato S.R."/>
            <person name="Simison M."/>
            <person name="Cherry J.M."/>
        </authorList>
    </citation>
    <scope>GENOME REANNOTATION</scope>
    <source>
        <strain>ATCC 204508 / S288c</strain>
    </source>
</reference>
<reference key="3">
    <citation type="journal article" date="2007" name="Genome Res.">
        <title>Approaching a complete repository of sequence-verified protein-encoding clones for Saccharomyces cerevisiae.</title>
        <authorList>
            <person name="Hu Y."/>
            <person name="Rolfs A."/>
            <person name="Bhullar B."/>
            <person name="Murthy T.V.S."/>
            <person name="Zhu C."/>
            <person name="Berger M.F."/>
            <person name="Camargo A.A."/>
            <person name="Kelley F."/>
            <person name="McCarron S."/>
            <person name="Jepson D."/>
            <person name="Richardson A."/>
            <person name="Raphael J."/>
            <person name="Moreira D."/>
            <person name="Taycher E."/>
            <person name="Zuo D."/>
            <person name="Mohr S."/>
            <person name="Kane M.F."/>
            <person name="Williamson J."/>
            <person name="Simpson A.J.G."/>
            <person name="Bulyk M.L."/>
            <person name="Harlow E."/>
            <person name="Marsischky G."/>
            <person name="Kolodner R.D."/>
            <person name="LaBaer J."/>
        </authorList>
    </citation>
    <scope>NUCLEOTIDE SEQUENCE [GENOMIC DNA]</scope>
    <source>
        <strain>ATCC 204508 / S288c</strain>
    </source>
</reference>
<name>YIC5_YEAST</name>
<comment type="caution">
    <text evidence="1">Product of a dubious gene prediction unlikely to encode a functional protein. Because of that it is not part of the S.cerevisiae S288c complete/reference proteome set.</text>
</comment>
<protein>
    <recommendedName>
        <fullName>Putative uncharacterized protein YIL025C</fullName>
    </recommendedName>
</protein>
<accession>P40542</accession>
<gene>
    <name type="ordered locus">YIL025C</name>
</gene>
<dbReference type="EMBL" id="Z46881">
    <property type="protein sequence ID" value="CAA86967.1"/>
    <property type="molecule type" value="Genomic_DNA"/>
</dbReference>
<dbReference type="EMBL" id="AY558300">
    <property type="protein sequence ID" value="AAS56626.1"/>
    <property type="molecule type" value="Genomic_DNA"/>
</dbReference>
<dbReference type="PIR" id="S49957">
    <property type="entry name" value="S49957"/>
</dbReference>
<dbReference type="DIP" id="DIP-4197N"/>
<dbReference type="STRING" id="4932.YIL025C"/>
<dbReference type="PaxDb" id="4932-YIL025C"/>
<dbReference type="EnsemblFungi" id="YIL025C_mRNA">
    <property type="protein sequence ID" value="YIL025C"/>
    <property type="gene ID" value="YIL025C"/>
</dbReference>
<dbReference type="AGR" id="SGD:S000001287"/>
<dbReference type="SGD" id="S000001287">
    <property type="gene designation" value="YIL025C"/>
</dbReference>
<dbReference type="HOGENOM" id="CLU_2005698_0_0_1"/>
<dbReference type="ChiTaRS" id="YIL025C">
    <property type="organism name" value="yeast"/>
</dbReference>
<feature type="chain" id="PRO_0000202999" description="Putative uncharacterized protein YIL025C">
    <location>
        <begin position="1"/>
        <end position="124"/>
    </location>
</feature>
<sequence length="124" mass="14083">MTNIYISIFSFLSSYGLDIHIFNRFIPFHLYHKVSISFRGIIIAVSRRGTQAPTDNGKRSGIITAYVKEEDQFKKGKGRGLRIGTLQATKRLIDSSYEALFLSIYCLSSSKQSFVTKKKAACYR</sequence>